<evidence type="ECO:0000255" key="1">
    <source>
        <dbReference type="HAMAP-Rule" id="MF_00003"/>
    </source>
</evidence>
<comment type="function">
    <text evidence="1">One of several proteins that assist in the late maturation steps of the functional core of the 30S ribosomal subunit. Associates with free 30S ribosomal subunits (but not with 30S subunits that are part of 70S ribosomes or polysomes). Required for efficient processing of 16S rRNA. May interact with the 5'-terminal helix region of 16S rRNA.</text>
</comment>
<comment type="subunit">
    <text evidence="1">Monomer. Binds 30S ribosomal subunits, but not 50S ribosomal subunits or 70S ribosomes.</text>
</comment>
<comment type="subcellular location">
    <subcellularLocation>
        <location evidence="1">Cytoplasm</location>
    </subcellularLocation>
</comment>
<comment type="similarity">
    <text evidence="1">Belongs to the RbfA family.</text>
</comment>
<accession>Q5HPS1</accession>
<name>RBFA_STAEQ</name>
<proteinExistence type="inferred from homology"/>
<sequence>MNNIRAERVGEQMKQEIMDIVNNKVKDPRVGFLTITDVELTNDLSQAKVYLTVLGNDKEVDNTFKALHKATGFIKSELGSRMRLRIIPELTFEYDESIEYGNKIERMIQELHKNDK</sequence>
<keyword id="KW-0963">Cytoplasm</keyword>
<keyword id="KW-1185">Reference proteome</keyword>
<keyword id="KW-0690">Ribosome biogenesis</keyword>
<feature type="chain" id="PRO_0000102737" description="Ribosome-binding factor A">
    <location>
        <begin position="1"/>
        <end position="116"/>
    </location>
</feature>
<protein>
    <recommendedName>
        <fullName evidence="1">Ribosome-binding factor A</fullName>
    </recommendedName>
</protein>
<organism>
    <name type="scientific">Staphylococcus epidermidis (strain ATCC 35984 / DSM 28319 / BCRC 17069 / CCUG 31568 / BM 3577 / RP62A)</name>
    <dbReference type="NCBI Taxonomy" id="176279"/>
    <lineage>
        <taxon>Bacteria</taxon>
        <taxon>Bacillati</taxon>
        <taxon>Bacillota</taxon>
        <taxon>Bacilli</taxon>
        <taxon>Bacillales</taxon>
        <taxon>Staphylococcaceae</taxon>
        <taxon>Staphylococcus</taxon>
    </lineage>
</organism>
<reference key="1">
    <citation type="journal article" date="2005" name="J. Bacteriol.">
        <title>Insights on evolution of virulence and resistance from the complete genome analysis of an early methicillin-resistant Staphylococcus aureus strain and a biofilm-producing methicillin-resistant Staphylococcus epidermidis strain.</title>
        <authorList>
            <person name="Gill S.R."/>
            <person name="Fouts D.E."/>
            <person name="Archer G.L."/>
            <person name="Mongodin E.F."/>
            <person name="DeBoy R.T."/>
            <person name="Ravel J."/>
            <person name="Paulsen I.T."/>
            <person name="Kolonay J.F."/>
            <person name="Brinkac L.M."/>
            <person name="Beanan M.J."/>
            <person name="Dodson R.J."/>
            <person name="Daugherty S.C."/>
            <person name="Madupu R."/>
            <person name="Angiuoli S.V."/>
            <person name="Durkin A.S."/>
            <person name="Haft D.H."/>
            <person name="Vamathevan J.J."/>
            <person name="Khouri H."/>
            <person name="Utterback T.R."/>
            <person name="Lee C."/>
            <person name="Dimitrov G."/>
            <person name="Jiang L."/>
            <person name="Qin H."/>
            <person name="Weidman J."/>
            <person name="Tran K."/>
            <person name="Kang K.H."/>
            <person name="Hance I.R."/>
            <person name="Nelson K.E."/>
            <person name="Fraser C.M."/>
        </authorList>
    </citation>
    <scope>NUCLEOTIDE SEQUENCE [LARGE SCALE GENOMIC DNA]</scope>
    <source>
        <strain>ATCC 35984 / DSM 28319 / BCRC 17069 / CCUG 31568 / BM 3577 / RP62A</strain>
    </source>
</reference>
<gene>
    <name evidence="1" type="primary">rbfA</name>
    <name type="ordered locus">SERP0837</name>
</gene>
<dbReference type="EMBL" id="CP000029">
    <property type="protein sequence ID" value="AAW54206.1"/>
    <property type="molecule type" value="Genomic_DNA"/>
</dbReference>
<dbReference type="RefSeq" id="WP_001829509.1">
    <property type="nucleotide sequence ID" value="NC_002976.3"/>
</dbReference>
<dbReference type="SMR" id="Q5HPS1"/>
<dbReference type="STRING" id="176279.SERP0837"/>
<dbReference type="GeneID" id="50018918"/>
<dbReference type="KEGG" id="ser:SERP0837"/>
<dbReference type="eggNOG" id="COG0858">
    <property type="taxonomic scope" value="Bacteria"/>
</dbReference>
<dbReference type="HOGENOM" id="CLU_089475_6_3_9"/>
<dbReference type="Proteomes" id="UP000000531">
    <property type="component" value="Chromosome"/>
</dbReference>
<dbReference type="GO" id="GO:0005829">
    <property type="term" value="C:cytosol"/>
    <property type="evidence" value="ECO:0007669"/>
    <property type="project" value="TreeGrafter"/>
</dbReference>
<dbReference type="GO" id="GO:0043024">
    <property type="term" value="F:ribosomal small subunit binding"/>
    <property type="evidence" value="ECO:0007669"/>
    <property type="project" value="TreeGrafter"/>
</dbReference>
<dbReference type="GO" id="GO:0030490">
    <property type="term" value="P:maturation of SSU-rRNA"/>
    <property type="evidence" value="ECO:0007669"/>
    <property type="project" value="UniProtKB-UniRule"/>
</dbReference>
<dbReference type="FunFam" id="3.30.300.20:FF:000009">
    <property type="entry name" value="Ribosome-binding factor A"/>
    <property type="match status" value="1"/>
</dbReference>
<dbReference type="Gene3D" id="3.30.300.20">
    <property type="match status" value="1"/>
</dbReference>
<dbReference type="HAMAP" id="MF_00003">
    <property type="entry name" value="RbfA"/>
    <property type="match status" value="1"/>
</dbReference>
<dbReference type="InterPro" id="IPR015946">
    <property type="entry name" value="KH_dom-like_a/b"/>
</dbReference>
<dbReference type="InterPro" id="IPR000238">
    <property type="entry name" value="RbfA"/>
</dbReference>
<dbReference type="InterPro" id="IPR023799">
    <property type="entry name" value="RbfA_dom_sf"/>
</dbReference>
<dbReference type="InterPro" id="IPR020053">
    <property type="entry name" value="Ribosome-bd_factorA_CS"/>
</dbReference>
<dbReference type="NCBIfam" id="TIGR00082">
    <property type="entry name" value="rbfA"/>
    <property type="match status" value="1"/>
</dbReference>
<dbReference type="PANTHER" id="PTHR33515">
    <property type="entry name" value="RIBOSOME-BINDING FACTOR A, CHLOROPLASTIC-RELATED"/>
    <property type="match status" value="1"/>
</dbReference>
<dbReference type="PANTHER" id="PTHR33515:SF1">
    <property type="entry name" value="RIBOSOME-BINDING FACTOR A, CHLOROPLASTIC-RELATED"/>
    <property type="match status" value="1"/>
</dbReference>
<dbReference type="Pfam" id="PF02033">
    <property type="entry name" value="RBFA"/>
    <property type="match status" value="1"/>
</dbReference>
<dbReference type="SUPFAM" id="SSF89919">
    <property type="entry name" value="Ribosome-binding factor A, RbfA"/>
    <property type="match status" value="1"/>
</dbReference>
<dbReference type="PROSITE" id="PS01319">
    <property type="entry name" value="RBFA"/>
    <property type="match status" value="1"/>
</dbReference>